<reference key="1">
    <citation type="submission" date="2000-12" db="EMBL/GenBank/DDBJ databases">
        <title>Molecular evidence for evolution of piscivory in Noctilio (Chiroptera: Noctilionidae).</title>
        <authorList>
            <person name="Lewis-Oritt N."/>
            <person name="Van Den Bussche R.A."/>
            <person name="Baker R.J."/>
        </authorList>
    </citation>
    <scope>NUCLEOTIDE SEQUENCE [GENOMIC DNA]</scope>
    <source>
        <strain>Isolate TK 17633</strain>
        <strain>Isolate TK 19032</strain>
        <strain>Isolate TK 22849</strain>
        <strain>Isolate TK 86633</strain>
    </source>
</reference>
<comment type="function">
    <text evidence="2">Component of the ubiquinol-cytochrome c reductase complex (complex III or cytochrome b-c1 complex) that is part of the mitochondrial respiratory chain. The b-c1 complex mediates electron transfer from ubiquinol to cytochrome c. Contributes to the generation of a proton gradient across the mitochondrial membrane that is then used for ATP synthesis.</text>
</comment>
<comment type="cofactor">
    <cofactor evidence="2">
        <name>heme b</name>
        <dbReference type="ChEBI" id="CHEBI:60344"/>
    </cofactor>
    <text evidence="2">Binds 2 heme b groups non-covalently.</text>
</comment>
<comment type="subunit">
    <text evidence="2">The cytochrome bc1 complex contains 11 subunits: 3 respiratory subunits (MT-CYB, CYC1 and UQCRFS1), 2 core proteins (UQCRC1 and UQCRC2) and 6 low-molecular weight proteins (UQCRH/QCR6, UQCRB/QCR7, UQCRQ/QCR8, UQCR10/QCR9, UQCR11/QCR10 and a cleavage product of UQCRFS1). This cytochrome bc1 complex then forms a dimer.</text>
</comment>
<comment type="subcellular location">
    <subcellularLocation>
        <location evidence="2">Mitochondrion inner membrane</location>
        <topology evidence="2">Multi-pass membrane protein</topology>
    </subcellularLocation>
</comment>
<comment type="miscellaneous">
    <text evidence="1">Heme 1 (or BL or b562) is low-potential and absorbs at about 562 nm, and heme 2 (or BH or b566) is high-potential and absorbs at about 566 nm.</text>
</comment>
<comment type="similarity">
    <text evidence="3 4">Belongs to the cytochrome b family.</text>
</comment>
<comment type="caution">
    <text evidence="2">The full-length protein contains only eight transmembrane helices, not nine as predicted by bioinformatics tools.</text>
</comment>
<proteinExistence type="inferred from homology"/>
<keyword id="KW-0249">Electron transport</keyword>
<keyword id="KW-0349">Heme</keyword>
<keyword id="KW-0408">Iron</keyword>
<keyword id="KW-0472">Membrane</keyword>
<keyword id="KW-0479">Metal-binding</keyword>
<keyword id="KW-0496">Mitochondrion</keyword>
<keyword id="KW-0999">Mitochondrion inner membrane</keyword>
<keyword id="KW-0679">Respiratory chain</keyword>
<keyword id="KW-0812">Transmembrane</keyword>
<keyword id="KW-1133">Transmembrane helix</keyword>
<keyword id="KW-0813">Transport</keyword>
<keyword id="KW-0830">Ubiquinone</keyword>
<protein>
    <recommendedName>
        <fullName>Cytochrome b</fullName>
    </recommendedName>
    <alternativeName>
        <fullName>Complex III subunit 3</fullName>
    </alternativeName>
    <alternativeName>
        <fullName>Complex III subunit III</fullName>
    </alternativeName>
    <alternativeName>
        <fullName>Cytochrome b-c1 complex subunit 3</fullName>
    </alternativeName>
    <alternativeName>
        <fullName>Ubiquinol-cytochrome-c reductase complex cytochrome b subunit</fullName>
    </alternativeName>
</protein>
<dbReference type="EMBL" id="AF330803">
    <property type="protein sequence ID" value="AAL59432.1"/>
    <property type="molecule type" value="Genomic_DNA"/>
</dbReference>
<dbReference type="EMBL" id="AF330804">
    <property type="protein sequence ID" value="AAL59433.1"/>
    <property type="molecule type" value="Genomic_DNA"/>
</dbReference>
<dbReference type="EMBL" id="AF330805">
    <property type="protein sequence ID" value="AAL59434.1"/>
    <property type="molecule type" value="Genomic_DNA"/>
</dbReference>
<dbReference type="EMBL" id="AF330806">
    <property type="protein sequence ID" value="AAL59435.1"/>
    <property type="molecule type" value="Genomic_DNA"/>
</dbReference>
<dbReference type="SMR" id="Q8W926"/>
<dbReference type="GO" id="GO:0005743">
    <property type="term" value="C:mitochondrial inner membrane"/>
    <property type="evidence" value="ECO:0007669"/>
    <property type="project" value="UniProtKB-SubCell"/>
</dbReference>
<dbReference type="GO" id="GO:0045275">
    <property type="term" value="C:respiratory chain complex III"/>
    <property type="evidence" value="ECO:0007669"/>
    <property type="project" value="InterPro"/>
</dbReference>
<dbReference type="GO" id="GO:0046872">
    <property type="term" value="F:metal ion binding"/>
    <property type="evidence" value="ECO:0007669"/>
    <property type="project" value="UniProtKB-KW"/>
</dbReference>
<dbReference type="GO" id="GO:0008121">
    <property type="term" value="F:ubiquinol-cytochrome-c reductase activity"/>
    <property type="evidence" value="ECO:0007669"/>
    <property type="project" value="InterPro"/>
</dbReference>
<dbReference type="GO" id="GO:0006122">
    <property type="term" value="P:mitochondrial electron transport, ubiquinol to cytochrome c"/>
    <property type="evidence" value="ECO:0007669"/>
    <property type="project" value="TreeGrafter"/>
</dbReference>
<dbReference type="CDD" id="cd00290">
    <property type="entry name" value="cytochrome_b_C"/>
    <property type="match status" value="1"/>
</dbReference>
<dbReference type="CDD" id="cd00284">
    <property type="entry name" value="Cytochrome_b_N"/>
    <property type="match status" value="1"/>
</dbReference>
<dbReference type="FunFam" id="1.20.810.10:FF:000002">
    <property type="entry name" value="Cytochrome b"/>
    <property type="match status" value="1"/>
</dbReference>
<dbReference type="Gene3D" id="1.20.810.10">
    <property type="entry name" value="Cytochrome Bc1 Complex, Chain C"/>
    <property type="match status" value="1"/>
</dbReference>
<dbReference type="InterPro" id="IPR005798">
    <property type="entry name" value="Cyt_b/b6_C"/>
</dbReference>
<dbReference type="InterPro" id="IPR036150">
    <property type="entry name" value="Cyt_b/b6_C_sf"/>
</dbReference>
<dbReference type="InterPro" id="IPR005797">
    <property type="entry name" value="Cyt_b/b6_N"/>
</dbReference>
<dbReference type="InterPro" id="IPR027387">
    <property type="entry name" value="Cytb/b6-like_sf"/>
</dbReference>
<dbReference type="InterPro" id="IPR030689">
    <property type="entry name" value="Cytochrome_b"/>
</dbReference>
<dbReference type="InterPro" id="IPR048260">
    <property type="entry name" value="Cytochrome_b_C_euk/bac"/>
</dbReference>
<dbReference type="InterPro" id="IPR048259">
    <property type="entry name" value="Cytochrome_b_N_euk/bac"/>
</dbReference>
<dbReference type="InterPro" id="IPR016174">
    <property type="entry name" value="Di-haem_cyt_TM"/>
</dbReference>
<dbReference type="PANTHER" id="PTHR19271">
    <property type="entry name" value="CYTOCHROME B"/>
    <property type="match status" value="1"/>
</dbReference>
<dbReference type="PANTHER" id="PTHR19271:SF16">
    <property type="entry name" value="CYTOCHROME B"/>
    <property type="match status" value="1"/>
</dbReference>
<dbReference type="Pfam" id="PF00032">
    <property type="entry name" value="Cytochrom_B_C"/>
    <property type="match status" value="1"/>
</dbReference>
<dbReference type="Pfam" id="PF00033">
    <property type="entry name" value="Cytochrome_B"/>
    <property type="match status" value="1"/>
</dbReference>
<dbReference type="PIRSF" id="PIRSF038885">
    <property type="entry name" value="COB"/>
    <property type="match status" value="1"/>
</dbReference>
<dbReference type="SUPFAM" id="SSF81648">
    <property type="entry name" value="a domain/subunit of cytochrome bc1 complex (Ubiquinol-cytochrome c reductase)"/>
    <property type="match status" value="1"/>
</dbReference>
<dbReference type="SUPFAM" id="SSF81342">
    <property type="entry name" value="Transmembrane di-heme cytochromes"/>
    <property type="match status" value="1"/>
</dbReference>
<dbReference type="PROSITE" id="PS51003">
    <property type="entry name" value="CYTB_CTER"/>
    <property type="match status" value="1"/>
</dbReference>
<dbReference type="PROSITE" id="PS51002">
    <property type="entry name" value="CYTB_NTER"/>
    <property type="match status" value="1"/>
</dbReference>
<evidence type="ECO:0000250" key="1"/>
<evidence type="ECO:0000250" key="2">
    <source>
        <dbReference type="UniProtKB" id="P00157"/>
    </source>
</evidence>
<evidence type="ECO:0000255" key="3">
    <source>
        <dbReference type="PROSITE-ProRule" id="PRU00967"/>
    </source>
</evidence>
<evidence type="ECO:0000255" key="4">
    <source>
        <dbReference type="PROSITE-ProRule" id="PRU00968"/>
    </source>
</evidence>
<name>CYB_NOCAL</name>
<organism>
    <name type="scientific">Noctilio albiventris</name>
    <name type="common">Lesser bulldog bat</name>
    <dbReference type="NCBI Taxonomy" id="94962"/>
    <lineage>
        <taxon>Eukaryota</taxon>
        <taxon>Metazoa</taxon>
        <taxon>Chordata</taxon>
        <taxon>Craniata</taxon>
        <taxon>Vertebrata</taxon>
        <taxon>Euteleostomi</taxon>
        <taxon>Mammalia</taxon>
        <taxon>Eutheria</taxon>
        <taxon>Laurasiatheria</taxon>
        <taxon>Chiroptera</taxon>
        <taxon>Yangochiroptera</taxon>
        <taxon>Noctilionidae</taxon>
        <taxon>Noctilio</taxon>
    </lineage>
</organism>
<geneLocation type="mitochondrion"/>
<feature type="chain" id="PRO_0000061278" description="Cytochrome b">
    <location>
        <begin position="1"/>
        <end position="379"/>
    </location>
</feature>
<feature type="transmembrane region" description="Helical" evidence="2">
    <location>
        <begin position="33"/>
        <end position="53"/>
    </location>
</feature>
<feature type="transmembrane region" description="Helical" evidence="2">
    <location>
        <begin position="77"/>
        <end position="98"/>
    </location>
</feature>
<feature type="transmembrane region" description="Helical" evidence="2">
    <location>
        <begin position="113"/>
        <end position="133"/>
    </location>
</feature>
<feature type="transmembrane region" description="Helical" evidence="2">
    <location>
        <begin position="178"/>
        <end position="198"/>
    </location>
</feature>
<feature type="transmembrane region" description="Helical" evidence="2">
    <location>
        <begin position="226"/>
        <end position="246"/>
    </location>
</feature>
<feature type="transmembrane region" description="Helical" evidence="2">
    <location>
        <begin position="288"/>
        <end position="308"/>
    </location>
</feature>
<feature type="transmembrane region" description="Helical" evidence="2">
    <location>
        <begin position="320"/>
        <end position="340"/>
    </location>
</feature>
<feature type="transmembrane region" description="Helical" evidence="2">
    <location>
        <begin position="347"/>
        <end position="367"/>
    </location>
</feature>
<feature type="binding site" description="axial binding residue" evidence="2">
    <location>
        <position position="83"/>
    </location>
    <ligand>
        <name>heme b</name>
        <dbReference type="ChEBI" id="CHEBI:60344"/>
        <label>b562</label>
    </ligand>
    <ligandPart>
        <name>Fe</name>
        <dbReference type="ChEBI" id="CHEBI:18248"/>
    </ligandPart>
</feature>
<feature type="binding site" description="axial binding residue" evidence="2">
    <location>
        <position position="97"/>
    </location>
    <ligand>
        <name>heme b</name>
        <dbReference type="ChEBI" id="CHEBI:60344"/>
        <label>b566</label>
    </ligand>
    <ligandPart>
        <name>Fe</name>
        <dbReference type="ChEBI" id="CHEBI:18248"/>
    </ligandPart>
</feature>
<feature type="binding site" description="axial binding residue" evidence="2">
    <location>
        <position position="182"/>
    </location>
    <ligand>
        <name>heme b</name>
        <dbReference type="ChEBI" id="CHEBI:60344"/>
        <label>b562</label>
    </ligand>
    <ligandPart>
        <name>Fe</name>
        <dbReference type="ChEBI" id="CHEBI:18248"/>
    </ligandPart>
</feature>
<feature type="binding site" description="axial binding residue" evidence="2">
    <location>
        <position position="196"/>
    </location>
    <ligand>
        <name>heme b</name>
        <dbReference type="ChEBI" id="CHEBI:60344"/>
        <label>b566</label>
    </ligand>
    <ligandPart>
        <name>Fe</name>
        <dbReference type="ChEBI" id="CHEBI:18248"/>
    </ligandPart>
</feature>
<feature type="binding site" evidence="2">
    <location>
        <position position="201"/>
    </location>
    <ligand>
        <name>a ubiquinone</name>
        <dbReference type="ChEBI" id="CHEBI:16389"/>
    </ligand>
</feature>
<feature type="sequence variant" description="In strain: Isolate TK 17633.">
    <original>L</original>
    <variation>R</variation>
    <location>
        <position position="150"/>
    </location>
</feature>
<sequence length="379" mass="42650">MTNLRKSHPILKIINSSLVDLPVPVSISSWWNFGSLLMACLAVQILTGLFLAMHYTSDTATAFNSVTHICRDVNYGWIIRYLHANGASMFFICLYLHIGRGLYYGSYLYSETWNIGILLLFATMATAFMGYVLPWGQMSFWGATVITNLLSAIPYVGTDLVQWIWGGFSVDKATLTRFFAFHFLLPFIIAALAMVHLLFLHETGSNNPTGIPSDTDMIPFHPYHTIKDILGLMLMLSVLSALVLFSPDLLGDPDNYTPANPLNTPPHIKPEWYFLFAYAILRSIPNKLGGVLALVLSILILAVIPFLHTSKQRSMMFRPLSQCLFWILTSDLLILTWIGGQPVEHPYIIIGQVASIMYFTIILIIMPLTSLLENHLLKW</sequence>
<gene>
    <name type="primary">MT-CYB</name>
    <name type="synonym">COB</name>
    <name type="synonym">CYTB</name>
    <name type="synonym">MTCYB</name>
</gene>
<accession>Q8W926</accession>
<accession>Q8WDK7</accession>